<feature type="chain" id="PRO_0000141591" description="Glutaredoxin">
    <location>
        <begin position="1"/>
        <end position="87"/>
    </location>
</feature>
<feature type="domain" description="Glutaredoxin" evidence="2">
    <location>
        <begin position="1"/>
        <end position="87"/>
    </location>
</feature>
<feature type="disulfide bond" description="Redox-active" evidence="1">
    <location>
        <begin position="11"/>
        <end position="14"/>
    </location>
</feature>
<name>GLRX_HAEIN</name>
<comment type="function">
    <text evidence="1">Has a glutathione-disulfide oxidoreductase activity in the presence of NADPH and glutathione reductase. Reduces low molecular weight disulfides and proteins (By similarity).</text>
</comment>
<comment type="subunit">
    <text evidence="1">Monomer.</text>
</comment>
<comment type="subcellular location">
    <subcellularLocation>
        <location evidence="1">Cytoplasm</location>
    </subcellularLocation>
</comment>
<comment type="similarity">
    <text evidence="3">Belongs to the glutaredoxin family.</text>
</comment>
<gene>
    <name type="primary">grxA</name>
    <name type="synonym">grx</name>
    <name type="ordered locus">HI_1532</name>
</gene>
<sequence>MFVVIFGRPGCPYCVRAKNLAEKLKGEVADFDYRYVDIHAEGITKEDLSKSVGKPVETVPQIFIDEKPIGGCTDFEALMKEQFGIVA</sequence>
<accession>P45242</accession>
<organism>
    <name type="scientific">Haemophilus influenzae (strain ATCC 51907 / DSM 11121 / KW20 / Rd)</name>
    <dbReference type="NCBI Taxonomy" id="71421"/>
    <lineage>
        <taxon>Bacteria</taxon>
        <taxon>Pseudomonadati</taxon>
        <taxon>Pseudomonadota</taxon>
        <taxon>Gammaproteobacteria</taxon>
        <taxon>Pasteurellales</taxon>
        <taxon>Pasteurellaceae</taxon>
        <taxon>Haemophilus</taxon>
    </lineage>
</organism>
<reference key="1">
    <citation type="journal article" date="1995" name="Science">
        <title>Whole-genome random sequencing and assembly of Haemophilus influenzae Rd.</title>
        <authorList>
            <person name="Fleischmann R.D."/>
            <person name="Adams M.D."/>
            <person name="White O."/>
            <person name="Clayton R.A."/>
            <person name="Kirkness E.F."/>
            <person name="Kerlavage A.R."/>
            <person name="Bult C.J."/>
            <person name="Tomb J.-F."/>
            <person name="Dougherty B.A."/>
            <person name="Merrick J.M."/>
            <person name="McKenney K."/>
            <person name="Sutton G.G."/>
            <person name="FitzHugh W."/>
            <person name="Fields C.A."/>
            <person name="Gocayne J.D."/>
            <person name="Scott J.D."/>
            <person name="Shirley R."/>
            <person name="Liu L.-I."/>
            <person name="Glodek A."/>
            <person name="Kelley J.M."/>
            <person name="Weidman J.F."/>
            <person name="Phillips C.A."/>
            <person name="Spriggs T."/>
            <person name="Hedblom E."/>
            <person name="Cotton M.D."/>
            <person name="Utterback T.R."/>
            <person name="Hanna M.C."/>
            <person name="Nguyen D.T."/>
            <person name="Saudek D.M."/>
            <person name="Brandon R.C."/>
            <person name="Fine L.D."/>
            <person name="Fritchman J.L."/>
            <person name="Fuhrmann J.L."/>
            <person name="Geoghagen N.S.M."/>
            <person name="Gnehm C.L."/>
            <person name="McDonald L.A."/>
            <person name="Small K.V."/>
            <person name="Fraser C.M."/>
            <person name="Smith H.O."/>
            <person name="Venter J.C."/>
        </authorList>
    </citation>
    <scope>NUCLEOTIDE SEQUENCE [LARGE SCALE GENOMIC DNA]</scope>
    <source>
        <strain>ATCC 51907 / DSM 11121 / KW20 / Rd</strain>
    </source>
</reference>
<proteinExistence type="inferred from homology"/>
<evidence type="ECO:0000250" key="1"/>
<evidence type="ECO:0000255" key="2">
    <source>
        <dbReference type="PROSITE-ProRule" id="PRU00686"/>
    </source>
</evidence>
<evidence type="ECO:0000305" key="3"/>
<keyword id="KW-0963">Cytoplasm</keyword>
<keyword id="KW-1015">Disulfide bond</keyword>
<keyword id="KW-0249">Electron transport</keyword>
<keyword id="KW-0676">Redox-active center</keyword>
<keyword id="KW-1185">Reference proteome</keyword>
<keyword id="KW-0813">Transport</keyword>
<dbReference type="EMBL" id="L42023">
    <property type="protein sequence ID" value="AAC23182.1"/>
    <property type="molecule type" value="Genomic_DNA"/>
</dbReference>
<dbReference type="PIR" id="I64127">
    <property type="entry name" value="I64127"/>
</dbReference>
<dbReference type="RefSeq" id="NP_439681.1">
    <property type="nucleotide sequence ID" value="NC_000907.1"/>
</dbReference>
<dbReference type="SMR" id="P45242"/>
<dbReference type="STRING" id="71421.HI_1532"/>
<dbReference type="EnsemblBacteria" id="AAC23182">
    <property type="protein sequence ID" value="AAC23182"/>
    <property type="gene ID" value="HI_1532"/>
</dbReference>
<dbReference type="KEGG" id="hin:HI_1532"/>
<dbReference type="PATRIC" id="fig|71421.8.peg.1603"/>
<dbReference type="eggNOG" id="COG0695">
    <property type="taxonomic scope" value="Bacteria"/>
</dbReference>
<dbReference type="HOGENOM" id="CLU_026126_7_3_6"/>
<dbReference type="OrthoDB" id="9814618at2"/>
<dbReference type="PhylomeDB" id="P45242"/>
<dbReference type="BioCyc" id="HINF71421:G1GJ1-1554-MONOMER"/>
<dbReference type="Proteomes" id="UP000000579">
    <property type="component" value="Chromosome"/>
</dbReference>
<dbReference type="GO" id="GO:0005737">
    <property type="term" value="C:cytoplasm"/>
    <property type="evidence" value="ECO:0000318"/>
    <property type="project" value="GO_Central"/>
</dbReference>
<dbReference type="GO" id="GO:0009055">
    <property type="term" value="F:electron transfer activity"/>
    <property type="evidence" value="ECO:0007669"/>
    <property type="project" value="InterPro"/>
</dbReference>
<dbReference type="GO" id="GO:0015038">
    <property type="term" value="F:glutathione disulfide oxidoreductase activity"/>
    <property type="evidence" value="ECO:0000318"/>
    <property type="project" value="GO_Central"/>
</dbReference>
<dbReference type="GO" id="GO:0015035">
    <property type="term" value="F:protein-disulfide reductase activity"/>
    <property type="evidence" value="ECO:0007669"/>
    <property type="project" value="InterPro"/>
</dbReference>
<dbReference type="GO" id="GO:0045454">
    <property type="term" value="P:cell redox homeostasis"/>
    <property type="evidence" value="ECO:0007669"/>
    <property type="project" value="InterPro"/>
</dbReference>
<dbReference type="GO" id="GO:0034599">
    <property type="term" value="P:cellular response to oxidative stress"/>
    <property type="evidence" value="ECO:0000318"/>
    <property type="project" value="GO_Central"/>
</dbReference>
<dbReference type="CDD" id="cd02066">
    <property type="entry name" value="GRX_family"/>
    <property type="match status" value="1"/>
</dbReference>
<dbReference type="Gene3D" id="3.40.30.10">
    <property type="entry name" value="Glutaredoxin"/>
    <property type="match status" value="1"/>
</dbReference>
<dbReference type="InterPro" id="IPR011767">
    <property type="entry name" value="GLR_AS"/>
</dbReference>
<dbReference type="InterPro" id="IPR002109">
    <property type="entry name" value="Glutaredoxin"/>
</dbReference>
<dbReference type="InterPro" id="IPR014025">
    <property type="entry name" value="Glutaredoxin_subgr"/>
</dbReference>
<dbReference type="InterPro" id="IPR011902">
    <property type="entry name" value="GRXA"/>
</dbReference>
<dbReference type="InterPro" id="IPR036249">
    <property type="entry name" value="Thioredoxin-like_sf"/>
</dbReference>
<dbReference type="NCBIfam" id="TIGR02183">
    <property type="entry name" value="GRXA"/>
    <property type="match status" value="1"/>
</dbReference>
<dbReference type="NCBIfam" id="NF008401">
    <property type="entry name" value="PRK11200.1"/>
    <property type="match status" value="1"/>
</dbReference>
<dbReference type="PANTHER" id="PTHR45694:SF28">
    <property type="entry name" value="GLUTAREDOXIN 1"/>
    <property type="match status" value="1"/>
</dbReference>
<dbReference type="PANTHER" id="PTHR45694">
    <property type="entry name" value="GLUTAREDOXIN 2"/>
    <property type="match status" value="1"/>
</dbReference>
<dbReference type="Pfam" id="PF00462">
    <property type="entry name" value="Glutaredoxin"/>
    <property type="match status" value="1"/>
</dbReference>
<dbReference type="PRINTS" id="PR00160">
    <property type="entry name" value="GLUTAREDOXIN"/>
</dbReference>
<dbReference type="SUPFAM" id="SSF52833">
    <property type="entry name" value="Thioredoxin-like"/>
    <property type="match status" value="1"/>
</dbReference>
<dbReference type="PROSITE" id="PS00195">
    <property type="entry name" value="GLUTAREDOXIN_1"/>
    <property type="match status" value="1"/>
</dbReference>
<dbReference type="PROSITE" id="PS51354">
    <property type="entry name" value="GLUTAREDOXIN_2"/>
    <property type="match status" value="1"/>
</dbReference>
<protein>
    <recommendedName>
        <fullName>Glutaredoxin</fullName>
    </recommendedName>
</protein>